<reference key="1">
    <citation type="journal article" date="2000" name="FEBS Lett.">
        <title>Secretional luciferase of the luminous shrimp Oplophorus gracilirostris: cDNA cloning of a novel imidazopyrazinone luciferase(1).</title>
        <authorList>
            <person name="Inouye S."/>
            <person name="Watanabe K."/>
            <person name="Nakamura H."/>
            <person name="Shimomura O."/>
        </authorList>
    </citation>
    <scope>NUCLEOTIDE SEQUENCE [MRNA]</scope>
    <scope>PARTIAL PROTEIN SEQUENCE</scope>
    <scope>FUNCTION</scope>
    <scope>SUBUNIT</scope>
</reference>
<feature type="signal peptide" evidence="2">
    <location>
        <begin position="1"/>
        <end position="39"/>
    </location>
</feature>
<feature type="chain" id="PRO_0000418819" description="Oplophorus-luciferin 2-monooxygenase non-catalytic subunit">
    <location>
        <begin position="40"/>
        <end position="359"/>
    </location>
</feature>
<feature type="repeat" description="LRR 1">
    <location>
        <begin position="135"/>
        <end position="158"/>
    </location>
</feature>
<feature type="repeat" description="LRR 2">
    <location>
        <begin position="160"/>
        <end position="180"/>
    </location>
</feature>
<feature type="repeat" description="LRR 3">
    <location>
        <begin position="181"/>
        <end position="203"/>
    </location>
</feature>
<feature type="repeat" description="LRR 4">
    <location>
        <begin position="228"/>
        <end position="251"/>
    </location>
</feature>
<feature type="repeat" description="LRR 5">
    <location>
        <begin position="255"/>
        <end position="278"/>
    </location>
</feature>
<feature type="repeat" description="LRR 6">
    <location>
        <begin position="280"/>
        <end position="300"/>
    </location>
</feature>
<feature type="repeat" description="LRR 7">
    <location>
        <begin position="302"/>
        <end position="325"/>
    </location>
</feature>
<feature type="repeat" description="LRR 8">
    <location>
        <begin position="331"/>
        <end position="356"/>
    </location>
</feature>
<evidence type="ECO:0000269" key="1">
    <source>
    </source>
</evidence>
<evidence type="ECO:0000305" key="2"/>
<sequence>MAVNFKFSLLTITIVVNILVYCNASAIKFDVDLEKVPSNAVACPAAEDIAPCTCKVGEGDVMDMDCSKVTSDAELASIFSKTFPSNTFRELFIEFNREITTLTADSLGAATFTKIAITSCTQLKTIEENAFMASAATLEKLVLLKNDLSSFPFEEMSQYTKLNWLELSVNSITGWPALSSDTLANLILFRNPIGNIPVDAFQTLPNIEQFNCFDCSITEVEAGTFTRSPKLQKLVLGYNGLTSLPVGAIKLHGHGPTTSNLGITNNQIISFPEGAVEGIQGILGIDFNRVTSLSEEVWRPILENLFQFSLLNNPLACVCDVMWLIDSPELLAKIKGNPRCAGGKRLKNLDPAVFHAMCQ</sequence>
<keyword id="KW-0903">Direct protein sequencing</keyword>
<keyword id="KW-0433">Leucine-rich repeat</keyword>
<keyword id="KW-0677">Repeat</keyword>
<keyword id="KW-0964">Secreted</keyword>
<keyword id="KW-0732">Signal</keyword>
<dbReference type="EMBL" id="AB030245">
    <property type="protein sequence ID" value="BAB13775.1"/>
    <property type="molecule type" value="mRNA"/>
</dbReference>
<dbReference type="SMR" id="Q9GV46"/>
<dbReference type="KEGG" id="ag:BAB13775"/>
<dbReference type="BRENDA" id="1.13.12.13">
    <property type="organism ID" value="4421"/>
</dbReference>
<dbReference type="GO" id="GO:0005576">
    <property type="term" value="C:extracellular region"/>
    <property type="evidence" value="ECO:0007669"/>
    <property type="project" value="UniProtKB-SubCell"/>
</dbReference>
<dbReference type="GO" id="GO:0016020">
    <property type="term" value="C:membrane"/>
    <property type="evidence" value="ECO:0007669"/>
    <property type="project" value="TreeGrafter"/>
</dbReference>
<dbReference type="Gene3D" id="3.80.10.10">
    <property type="entry name" value="Ribonuclease Inhibitor"/>
    <property type="match status" value="2"/>
</dbReference>
<dbReference type="InterPro" id="IPR032675">
    <property type="entry name" value="LRR_dom_sf"/>
</dbReference>
<dbReference type="InterPro" id="IPR052286">
    <property type="entry name" value="Wnt_signaling_inhibitor"/>
</dbReference>
<dbReference type="PANTHER" id="PTHR24364">
    <property type="entry name" value="LP06937P"/>
    <property type="match status" value="1"/>
</dbReference>
<dbReference type="PANTHER" id="PTHR24364:SF18">
    <property type="entry name" value="LP06937P"/>
    <property type="match status" value="1"/>
</dbReference>
<dbReference type="SUPFAM" id="SSF52058">
    <property type="entry name" value="L domain-like"/>
    <property type="match status" value="1"/>
</dbReference>
<accession>Q9GV46</accession>
<protein>
    <recommendedName>
        <fullName>Oplophorus-luciferin 2-monooxygenase non-catalytic subunit</fullName>
    </recommendedName>
</protein>
<comment type="function">
    <text evidence="1">Non-catalytic subunit of oplophorus-luciferin 2-monooxygenase. May stabilize the active conformation of the catalytic subunit.</text>
</comment>
<comment type="subunit">
    <text evidence="1">Heterotetramer of a catalytic 19 kDa and a non-catalytic 35 kDa subunit.</text>
</comment>
<comment type="subcellular location">
    <subcellularLocation>
        <location evidence="2">Secreted</location>
    </subcellularLocation>
</comment>
<comment type="miscellaneous">
    <text>The shrimp has luminous glands at the base of its antennae and legs, and ejects a cloud of brightly luminescent secretion from the base of its antennae upon stimulation.</text>
</comment>
<name>LUCB_OPLGR</name>
<organism>
    <name type="scientific">Oplophorus gracilirostris</name>
    <name type="common">Luminous shrimp</name>
    <dbReference type="NCBI Taxonomy" id="727944"/>
    <lineage>
        <taxon>Eukaryota</taxon>
        <taxon>Metazoa</taxon>
        <taxon>Ecdysozoa</taxon>
        <taxon>Arthropoda</taxon>
        <taxon>Crustacea</taxon>
        <taxon>Multicrustacea</taxon>
        <taxon>Malacostraca</taxon>
        <taxon>Eumalacostraca</taxon>
        <taxon>Eucarida</taxon>
        <taxon>Decapoda</taxon>
        <taxon>Pleocyemata</taxon>
        <taxon>Caridea</taxon>
        <taxon>Oplophoroidea</taxon>
        <taxon>Oplophoridae</taxon>
        <taxon>Oplophorus</taxon>
    </lineage>
</organism>
<proteinExistence type="evidence at protein level"/>